<feature type="chain" id="PRO_0000220405" description="UPF0228 protein MM_1428">
    <location>
        <begin position="1"/>
        <end position="191"/>
    </location>
</feature>
<reference key="1">
    <citation type="journal article" date="2002" name="J. Mol. Microbiol. Biotechnol.">
        <title>The genome of Methanosarcina mazei: evidence for lateral gene transfer between Bacteria and Archaea.</title>
        <authorList>
            <person name="Deppenmeier U."/>
            <person name="Johann A."/>
            <person name="Hartsch T."/>
            <person name="Merkl R."/>
            <person name="Schmitz R.A."/>
            <person name="Martinez-Arias R."/>
            <person name="Henne A."/>
            <person name="Wiezer A."/>
            <person name="Baeumer S."/>
            <person name="Jacobi C."/>
            <person name="Brueggemann H."/>
            <person name="Lienard T."/>
            <person name="Christmann A."/>
            <person name="Boemecke M."/>
            <person name="Steckel S."/>
            <person name="Bhattacharyya A."/>
            <person name="Lykidis A."/>
            <person name="Overbeek R."/>
            <person name="Klenk H.-P."/>
            <person name="Gunsalus R.P."/>
            <person name="Fritz H.-J."/>
            <person name="Gottschalk G."/>
        </authorList>
    </citation>
    <scope>NUCLEOTIDE SEQUENCE [LARGE SCALE GENOMIC DNA]</scope>
    <source>
        <strain>ATCC BAA-159 / DSM 3647 / Goe1 / Go1 / JCM 11833 / OCM 88</strain>
    </source>
</reference>
<evidence type="ECO:0000305" key="1"/>
<protein>
    <recommendedName>
        <fullName>UPF0228 protein MM_1428</fullName>
    </recommendedName>
</protein>
<dbReference type="EMBL" id="AE008384">
    <property type="protein sequence ID" value="AAM31124.1"/>
    <property type="molecule type" value="Genomic_DNA"/>
</dbReference>
<dbReference type="RefSeq" id="WP_011033374.1">
    <property type="nucleotide sequence ID" value="NC_003901.1"/>
</dbReference>
<dbReference type="KEGG" id="mma:MM_1428"/>
<dbReference type="PATRIC" id="fig|192952.21.peg.1652"/>
<dbReference type="eggNOG" id="arCOG03623">
    <property type="taxonomic scope" value="Archaea"/>
</dbReference>
<dbReference type="HOGENOM" id="CLU_106567_0_0_2"/>
<dbReference type="Proteomes" id="UP000000595">
    <property type="component" value="Chromosome"/>
</dbReference>
<dbReference type="InterPro" id="IPR008887">
    <property type="entry name" value="UPF0228"/>
</dbReference>
<dbReference type="Pfam" id="PF05727">
    <property type="entry name" value="UPF0228"/>
    <property type="match status" value="1"/>
</dbReference>
<gene>
    <name type="ordered locus">MM_1428</name>
</gene>
<proteinExistence type="inferred from homology"/>
<organism>
    <name type="scientific">Methanosarcina mazei (strain ATCC BAA-159 / DSM 3647 / Goe1 / Go1 / JCM 11833 / OCM 88)</name>
    <name type="common">Methanosarcina frisia</name>
    <dbReference type="NCBI Taxonomy" id="192952"/>
    <lineage>
        <taxon>Archaea</taxon>
        <taxon>Methanobacteriati</taxon>
        <taxon>Methanobacteriota</taxon>
        <taxon>Stenosarchaea group</taxon>
        <taxon>Methanomicrobia</taxon>
        <taxon>Methanosarcinales</taxon>
        <taxon>Methanosarcinaceae</taxon>
        <taxon>Methanosarcina</taxon>
    </lineage>
</organism>
<name>Y1428_METMA</name>
<sequence>MSKINGKIAVFTVFLVLVVVYGYMQAPTNREVKIDSFLIQFENGTTEPEVKAILENYNMTLNYSIDCNSDNGGYKYYIKVDKDDMPDVVKDGLKKDKNWTDSGSPSFTKGDYVIYPVTEQAIHDKNFLEILKRHNIQVKTFVWCLVSYRDNSTRYDVLGKNCITEKDANRITNELEMNENVLIVMPEYICY</sequence>
<accession>Q8PWZ4</accession>
<comment type="similarity">
    <text evidence="1">Belongs to the UPF0228 family.</text>
</comment>